<geneLocation type="plasmid">
    <name>pXO2</name>
</geneLocation>
<keyword id="KW-0614">Plasmid</keyword>
<keyword id="KW-1185">Reference proteome</keyword>
<proteinExistence type="predicted"/>
<accession>Q9RN25</accession>
<sequence>MNNLSKILSGALVLSLSFNGIWAYNTTKEFDKKDKKYRVTVSEKEKQIGDLKVKLEQKDKKINEGGAGENKKEGNSTLDLQNKYREVANQFVHAYLDYSVQNKGERRNNLLKITDKKVVDIVAPNTDDLGDPNFKSHVNKAAIYINSEGDVSKKCTALLDIEYTIEGLENKQTTINSVVKITLEKQGEEIKVVEYNPYPVKR</sequence>
<protein>
    <recommendedName>
        <fullName>Uncharacterized protein pXO2-07/BXB0006/GBAA_pXO2_0006</fullName>
    </recommendedName>
</protein>
<reference key="1">
    <citation type="journal article" date="1999" name="J. Appl. Microbiol.">
        <title>Sequence, assembly and analysis of pXO1 and pXO2.</title>
        <authorList>
            <person name="Okinaka R.T."/>
            <person name="Cloud K."/>
            <person name="Hampton O."/>
            <person name="Hoffmaster A."/>
            <person name="Hill K.K."/>
            <person name="Keim P."/>
            <person name="Koehler T."/>
            <person name="Lamke G."/>
            <person name="Kumano S."/>
            <person name="Manter D."/>
            <person name="Martinez Y."/>
            <person name="Ricke D."/>
            <person name="Svensson R."/>
            <person name="Jackson P.J."/>
        </authorList>
    </citation>
    <scope>NUCLEOTIDE SEQUENCE [GENOMIC DNA]</scope>
    <source>
        <strain>Pasteur</strain>
    </source>
</reference>
<reference key="2">
    <citation type="journal article" date="2002" name="Science">
        <title>Comparative genome sequencing for discovery of novel polymorphisms in Bacillus anthracis.</title>
        <authorList>
            <person name="Read T.D."/>
            <person name="Salzberg S.L."/>
            <person name="Pop M."/>
            <person name="Shumway M.F."/>
            <person name="Umayam L."/>
            <person name="Jiang L."/>
            <person name="Holtzapple E."/>
            <person name="Busch J.D."/>
            <person name="Smith K.L."/>
            <person name="Schupp J.M."/>
            <person name="Solomon D."/>
            <person name="Keim P."/>
            <person name="Fraser C.M."/>
        </authorList>
    </citation>
    <scope>NUCLEOTIDE SEQUENCE [GENOMIC DNA]</scope>
    <source>
        <strain>Ames / isolate Florida / A2012</strain>
    </source>
</reference>
<reference key="3">
    <citation type="journal article" date="2009" name="J. Bacteriol.">
        <title>The complete genome sequence of Bacillus anthracis Ames 'Ancestor'.</title>
        <authorList>
            <person name="Ravel J."/>
            <person name="Jiang L."/>
            <person name="Stanley S.T."/>
            <person name="Wilson M.R."/>
            <person name="Decker R.S."/>
            <person name="Read T.D."/>
            <person name="Worsham P."/>
            <person name="Keim P.S."/>
            <person name="Salzberg S.L."/>
            <person name="Fraser-Liggett C.M."/>
            <person name="Rasko D.A."/>
        </authorList>
    </citation>
    <scope>NUCLEOTIDE SEQUENCE [LARGE SCALE GENOMIC DNA]</scope>
    <source>
        <strain>Ames ancestor</strain>
    </source>
</reference>
<dbReference type="EMBL" id="AF188935">
    <property type="protein sequence ID" value="AAF13612.1"/>
    <property type="molecule type" value="Genomic_DNA"/>
</dbReference>
<dbReference type="EMBL" id="AE011191">
    <property type="protein sequence ID" value="AAM26167.1"/>
    <property type="molecule type" value="Genomic_DNA"/>
</dbReference>
<dbReference type="EMBL" id="AE017335">
    <property type="protein sequence ID" value="AAT28936.2"/>
    <property type="molecule type" value="Genomic_DNA"/>
</dbReference>
<dbReference type="RefSeq" id="NP_053162.1">
    <property type="nucleotide sequence ID" value="NC_002146.1"/>
</dbReference>
<dbReference type="RefSeq" id="WP_001061747.1">
    <property type="nucleotide sequence ID" value="NZ_VTZL01000009.1"/>
</dbReference>
<dbReference type="SMR" id="Q9RN25"/>
<dbReference type="GeneID" id="45025321"/>
<dbReference type="KEGG" id="banh:HYU01_29030"/>
<dbReference type="KEGG" id="bar:GBAA_pXO2_0006"/>
<dbReference type="HOGENOM" id="CLU_1352406_0_0_9"/>
<dbReference type="OMA" id="VNQMAMF"/>
<dbReference type="Proteomes" id="UP000000594">
    <property type="component" value="Plasmid pXO2"/>
</dbReference>
<organism>
    <name type="scientific">Bacillus anthracis</name>
    <dbReference type="NCBI Taxonomy" id="1392"/>
    <lineage>
        <taxon>Bacteria</taxon>
        <taxon>Bacillati</taxon>
        <taxon>Bacillota</taxon>
        <taxon>Bacilli</taxon>
        <taxon>Bacillales</taxon>
        <taxon>Bacillaceae</taxon>
        <taxon>Bacillus</taxon>
        <taxon>Bacillus cereus group</taxon>
    </lineage>
</organism>
<feature type="chain" id="PRO_0000216829" description="Uncharacterized protein pXO2-07/BXB0006/GBAA_pXO2_0006">
    <location>
        <begin position="1"/>
        <end position="202"/>
    </location>
</feature>
<gene>
    <name type="ordered locus">pXO2-07</name>
    <name type="ordered locus">BXB0006</name>
    <name type="ordered locus">GBAA_pXO2_0006</name>
</gene>
<name>Y6506_BACAN</name>